<dbReference type="EC" id="3.5.1.96" evidence="1"/>
<dbReference type="EMBL" id="CP000472">
    <property type="protein sequence ID" value="ACJ29344.1"/>
    <property type="molecule type" value="Genomic_DNA"/>
</dbReference>
<dbReference type="RefSeq" id="WP_020912700.1">
    <property type="nucleotide sequence ID" value="NC_011566.1"/>
</dbReference>
<dbReference type="SMR" id="B8CPA0"/>
<dbReference type="STRING" id="225849.swp_2607"/>
<dbReference type="KEGG" id="swp:swp_2607"/>
<dbReference type="eggNOG" id="COG2988">
    <property type="taxonomic scope" value="Bacteria"/>
</dbReference>
<dbReference type="HOGENOM" id="CLU_071608_0_0_6"/>
<dbReference type="OrthoDB" id="5290473at2"/>
<dbReference type="UniPathway" id="UPA00185">
    <property type="reaction ID" value="UER00283"/>
</dbReference>
<dbReference type="Proteomes" id="UP000000753">
    <property type="component" value="Chromosome"/>
</dbReference>
<dbReference type="GO" id="GO:0016788">
    <property type="term" value="F:hydrolase activity, acting on ester bonds"/>
    <property type="evidence" value="ECO:0007669"/>
    <property type="project" value="UniProtKB-UniRule"/>
</dbReference>
<dbReference type="GO" id="GO:0009017">
    <property type="term" value="F:succinylglutamate desuccinylase activity"/>
    <property type="evidence" value="ECO:0007669"/>
    <property type="project" value="UniProtKB-EC"/>
</dbReference>
<dbReference type="GO" id="GO:0008270">
    <property type="term" value="F:zinc ion binding"/>
    <property type="evidence" value="ECO:0007669"/>
    <property type="project" value="UniProtKB-UniRule"/>
</dbReference>
<dbReference type="GO" id="GO:0019544">
    <property type="term" value="P:arginine catabolic process to glutamate"/>
    <property type="evidence" value="ECO:0007669"/>
    <property type="project" value="UniProtKB-UniRule"/>
</dbReference>
<dbReference type="GO" id="GO:0019545">
    <property type="term" value="P:arginine catabolic process to succinate"/>
    <property type="evidence" value="ECO:0007669"/>
    <property type="project" value="UniProtKB-UniRule"/>
</dbReference>
<dbReference type="CDD" id="cd03855">
    <property type="entry name" value="M14_ASTE"/>
    <property type="match status" value="1"/>
</dbReference>
<dbReference type="Gene3D" id="3.40.630.10">
    <property type="entry name" value="Zn peptidases"/>
    <property type="match status" value="1"/>
</dbReference>
<dbReference type="HAMAP" id="MF_00767">
    <property type="entry name" value="Arg_catab_AstE"/>
    <property type="match status" value="1"/>
</dbReference>
<dbReference type="InterPro" id="IPR050178">
    <property type="entry name" value="AspA/AstE_fam"/>
</dbReference>
<dbReference type="InterPro" id="IPR055438">
    <property type="entry name" value="AstE_AspA_cat"/>
</dbReference>
<dbReference type="InterPro" id="IPR007036">
    <property type="entry name" value="Aste_AspA_hybrid_dom"/>
</dbReference>
<dbReference type="InterPro" id="IPR016681">
    <property type="entry name" value="SuccinylGlu_desuccinylase"/>
</dbReference>
<dbReference type="NCBIfam" id="TIGR03242">
    <property type="entry name" value="arg_catab_astE"/>
    <property type="match status" value="1"/>
</dbReference>
<dbReference type="NCBIfam" id="NF003706">
    <property type="entry name" value="PRK05324.1"/>
    <property type="match status" value="1"/>
</dbReference>
<dbReference type="PANTHER" id="PTHR15162">
    <property type="entry name" value="ASPARTOACYLASE"/>
    <property type="match status" value="1"/>
</dbReference>
<dbReference type="PANTHER" id="PTHR15162:SF7">
    <property type="entry name" value="SUCCINYLGLUTAMATE DESUCCINYLASE"/>
    <property type="match status" value="1"/>
</dbReference>
<dbReference type="Pfam" id="PF24827">
    <property type="entry name" value="AstE_AspA_cat"/>
    <property type="match status" value="1"/>
</dbReference>
<dbReference type="Pfam" id="PF04952">
    <property type="entry name" value="AstE_AspA_hybrid"/>
    <property type="match status" value="1"/>
</dbReference>
<dbReference type="PIRSF" id="PIRSF017020">
    <property type="entry name" value="AstE"/>
    <property type="match status" value="1"/>
</dbReference>
<dbReference type="SUPFAM" id="SSF53187">
    <property type="entry name" value="Zn-dependent exopeptidases"/>
    <property type="match status" value="1"/>
</dbReference>
<evidence type="ECO:0000255" key="1">
    <source>
        <dbReference type="HAMAP-Rule" id="MF_00767"/>
    </source>
</evidence>
<sequence length="345" mass="39684">MFHELKQSKDFLALTLAHPQYLSESFEFDLGEHTHVEVWDTGVIVFSPKQAKHSKDIVLSCAVHGNETAPIELCNALITQILSEELTLAQRVMFLIGNPAAIHNGTRFIDENLNRLFNGAHSRDEGLCNPERIRAHKLEQYVDRFYASQSGERQRIHYDLHTAIRGSKHEKFAIYPYRPGRKYSREQIMFLESCGVNTILFHHEPTTTFSYFSSENYRADAFTIELGKVFPMGQNDMTRFIAMKEMLTLLMTGKDLQLPEFDLKRLNLYQVCRSVNKHFDDFEFNFTNDVENFTAFPKGYTLAKEGGKAVKIEHEFESIVFPNAKVPVGQRTVLMLKTADDSNLD</sequence>
<gene>
    <name evidence="1" type="primary">astE</name>
    <name type="ordered locus">swp_2607</name>
</gene>
<proteinExistence type="inferred from homology"/>
<feature type="chain" id="PRO_1000133646" description="Succinylglutamate desuccinylase">
    <location>
        <begin position="1"/>
        <end position="345"/>
    </location>
</feature>
<feature type="active site" evidence="1">
    <location>
        <position position="225"/>
    </location>
</feature>
<feature type="binding site" evidence="1">
    <location>
        <position position="64"/>
    </location>
    <ligand>
        <name>Zn(2+)</name>
        <dbReference type="ChEBI" id="CHEBI:29105"/>
    </ligand>
</feature>
<feature type="binding site" evidence="1">
    <location>
        <position position="67"/>
    </location>
    <ligand>
        <name>Zn(2+)</name>
        <dbReference type="ChEBI" id="CHEBI:29105"/>
    </ligand>
</feature>
<feature type="binding site" evidence="1">
    <location>
        <position position="161"/>
    </location>
    <ligand>
        <name>Zn(2+)</name>
        <dbReference type="ChEBI" id="CHEBI:29105"/>
    </ligand>
</feature>
<protein>
    <recommendedName>
        <fullName evidence="1">Succinylglutamate desuccinylase</fullName>
        <ecNumber evidence="1">3.5.1.96</ecNumber>
    </recommendedName>
</protein>
<name>ASTE_SHEPW</name>
<comment type="function">
    <text evidence="1">Transforms N(2)-succinylglutamate into succinate and glutamate.</text>
</comment>
<comment type="catalytic activity">
    <reaction evidence="1">
        <text>N-succinyl-L-glutamate + H2O = L-glutamate + succinate</text>
        <dbReference type="Rhea" id="RHEA:15169"/>
        <dbReference type="ChEBI" id="CHEBI:15377"/>
        <dbReference type="ChEBI" id="CHEBI:29985"/>
        <dbReference type="ChEBI" id="CHEBI:30031"/>
        <dbReference type="ChEBI" id="CHEBI:58763"/>
        <dbReference type="EC" id="3.5.1.96"/>
    </reaction>
</comment>
<comment type="cofactor">
    <cofactor evidence="1">
        <name>Zn(2+)</name>
        <dbReference type="ChEBI" id="CHEBI:29105"/>
    </cofactor>
    <text evidence="1">Binds 1 zinc ion per subunit.</text>
</comment>
<comment type="pathway">
    <text evidence="1">Amino-acid degradation; L-arginine degradation via AST pathway; L-glutamate and succinate from L-arginine: step 5/5.</text>
</comment>
<comment type="similarity">
    <text evidence="1">Belongs to the AspA/AstE family. Succinylglutamate desuccinylase subfamily.</text>
</comment>
<keyword id="KW-0056">Arginine metabolism</keyword>
<keyword id="KW-0378">Hydrolase</keyword>
<keyword id="KW-0479">Metal-binding</keyword>
<keyword id="KW-0862">Zinc</keyword>
<accession>B8CPA0</accession>
<organism>
    <name type="scientific">Shewanella piezotolerans (strain WP3 / JCM 13877)</name>
    <dbReference type="NCBI Taxonomy" id="225849"/>
    <lineage>
        <taxon>Bacteria</taxon>
        <taxon>Pseudomonadati</taxon>
        <taxon>Pseudomonadota</taxon>
        <taxon>Gammaproteobacteria</taxon>
        <taxon>Alteromonadales</taxon>
        <taxon>Shewanellaceae</taxon>
        <taxon>Shewanella</taxon>
    </lineage>
</organism>
<reference key="1">
    <citation type="journal article" date="2008" name="PLoS ONE">
        <title>Environmental adaptation: genomic analysis of the piezotolerant and psychrotolerant deep-sea iron reducing bacterium Shewanella piezotolerans WP3.</title>
        <authorList>
            <person name="Wang F."/>
            <person name="Wang J."/>
            <person name="Jian H."/>
            <person name="Zhang B."/>
            <person name="Li S."/>
            <person name="Wang F."/>
            <person name="Zeng X."/>
            <person name="Gao L."/>
            <person name="Bartlett D.H."/>
            <person name="Yu J."/>
            <person name="Hu S."/>
            <person name="Xiao X."/>
        </authorList>
    </citation>
    <scope>NUCLEOTIDE SEQUENCE [LARGE SCALE GENOMIC DNA]</scope>
    <source>
        <strain>WP3 / JCM 13877</strain>
    </source>
</reference>